<dbReference type="EC" id="6.1.1.5" evidence="1"/>
<dbReference type="EMBL" id="CP000095">
    <property type="protein sequence ID" value="AAZ59093.1"/>
    <property type="molecule type" value="Genomic_DNA"/>
</dbReference>
<dbReference type="RefSeq" id="WP_011294238.1">
    <property type="nucleotide sequence ID" value="NC_007335.2"/>
</dbReference>
<dbReference type="SMR" id="Q46HD5"/>
<dbReference type="STRING" id="59920.PMN2A_1605"/>
<dbReference type="KEGG" id="pmn:PMN2A_1605"/>
<dbReference type="HOGENOM" id="CLU_001493_7_0_3"/>
<dbReference type="OrthoDB" id="9810365at2"/>
<dbReference type="PhylomeDB" id="Q46HD5"/>
<dbReference type="Proteomes" id="UP000002535">
    <property type="component" value="Chromosome"/>
</dbReference>
<dbReference type="GO" id="GO:0005737">
    <property type="term" value="C:cytoplasm"/>
    <property type="evidence" value="ECO:0007669"/>
    <property type="project" value="UniProtKB-SubCell"/>
</dbReference>
<dbReference type="GO" id="GO:0002161">
    <property type="term" value="F:aminoacyl-tRNA deacylase activity"/>
    <property type="evidence" value="ECO:0007669"/>
    <property type="project" value="InterPro"/>
</dbReference>
<dbReference type="GO" id="GO:0005524">
    <property type="term" value="F:ATP binding"/>
    <property type="evidence" value="ECO:0007669"/>
    <property type="project" value="UniProtKB-UniRule"/>
</dbReference>
<dbReference type="GO" id="GO:0004822">
    <property type="term" value="F:isoleucine-tRNA ligase activity"/>
    <property type="evidence" value="ECO:0007669"/>
    <property type="project" value="UniProtKB-UniRule"/>
</dbReference>
<dbReference type="GO" id="GO:0000049">
    <property type="term" value="F:tRNA binding"/>
    <property type="evidence" value="ECO:0007669"/>
    <property type="project" value="InterPro"/>
</dbReference>
<dbReference type="GO" id="GO:0008270">
    <property type="term" value="F:zinc ion binding"/>
    <property type="evidence" value="ECO:0007669"/>
    <property type="project" value="UniProtKB-UniRule"/>
</dbReference>
<dbReference type="GO" id="GO:0006428">
    <property type="term" value="P:isoleucyl-tRNA aminoacylation"/>
    <property type="evidence" value="ECO:0007669"/>
    <property type="project" value="UniProtKB-UniRule"/>
</dbReference>
<dbReference type="CDD" id="cd07960">
    <property type="entry name" value="Anticodon_Ia_Ile_BEm"/>
    <property type="match status" value="1"/>
</dbReference>
<dbReference type="FunFam" id="3.40.50.620:FF:000111">
    <property type="entry name" value="Mitochondrial isoleucyl-tRNA synthetase"/>
    <property type="match status" value="1"/>
</dbReference>
<dbReference type="Gene3D" id="1.10.730.20">
    <property type="match status" value="1"/>
</dbReference>
<dbReference type="Gene3D" id="3.40.50.620">
    <property type="entry name" value="HUPs"/>
    <property type="match status" value="2"/>
</dbReference>
<dbReference type="Gene3D" id="3.90.740.10">
    <property type="entry name" value="Valyl/Leucyl/Isoleucyl-tRNA synthetase, editing domain"/>
    <property type="match status" value="1"/>
</dbReference>
<dbReference type="HAMAP" id="MF_02002">
    <property type="entry name" value="Ile_tRNA_synth_type1"/>
    <property type="match status" value="1"/>
</dbReference>
<dbReference type="InterPro" id="IPR001412">
    <property type="entry name" value="aa-tRNA-synth_I_CS"/>
</dbReference>
<dbReference type="InterPro" id="IPR002300">
    <property type="entry name" value="aa-tRNA-synth_Ia"/>
</dbReference>
<dbReference type="InterPro" id="IPR033708">
    <property type="entry name" value="Anticodon_Ile_BEm"/>
</dbReference>
<dbReference type="InterPro" id="IPR002301">
    <property type="entry name" value="Ile-tRNA-ligase"/>
</dbReference>
<dbReference type="InterPro" id="IPR023585">
    <property type="entry name" value="Ile-tRNA-ligase_type1"/>
</dbReference>
<dbReference type="InterPro" id="IPR050081">
    <property type="entry name" value="Ile-tRNA_ligase"/>
</dbReference>
<dbReference type="InterPro" id="IPR013155">
    <property type="entry name" value="M/V/L/I-tRNA-synth_anticd-bd"/>
</dbReference>
<dbReference type="InterPro" id="IPR014729">
    <property type="entry name" value="Rossmann-like_a/b/a_fold"/>
</dbReference>
<dbReference type="InterPro" id="IPR009080">
    <property type="entry name" value="tRNAsynth_Ia_anticodon-bd"/>
</dbReference>
<dbReference type="InterPro" id="IPR009008">
    <property type="entry name" value="Val/Leu/Ile-tRNA-synth_edit"/>
</dbReference>
<dbReference type="InterPro" id="IPR010663">
    <property type="entry name" value="Znf_FPG/IleRS"/>
</dbReference>
<dbReference type="NCBIfam" id="TIGR00392">
    <property type="entry name" value="ileS"/>
    <property type="match status" value="1"/>
</dbReference>
<dbReference type="PANTHER" id="PTHR42765:SF1">
    <property type="entry name" value="ISOLEUCINE--TRNA LIGASE, MITOCHONDRIAL"/>
    <property type="match status" value="1"/>
</dbReference>
<dbReference type="PANTHER" id="PTHR42765">
    <property type="entry name" value="SOLEUCYL-TRNA SYNTHETASE"/>
    <property type="match status" value="1"/>
</dbReference>
<dbReference type="Pfam" id="PF08264">
    <property type="entry name" value="Anticodon_1"/>
    <property type="match status" value="1"/>
</dbReference>
<dbReference type="Pfam" id="PF00133">
    <property type="entry name" value="tRNA-synt_1"/>
    <property type="match status" value="1"/>
</dbReference>
<dbReference type="Pfam" id="PF06827">
    <property type="entry name" value="zf-FPG_IleRS"/>
    <property type="match status" value="1"/>
</dbReference>
<dbReference type="PRINTS" id="PR00984">
    <property type="entry name" value="TRNASYNTHILE"/>
</dbReference>
<dbReference type="SUPFAM" id="SSF47323">
    <property type="entry name" value="Anticodon-binding domain of a subclass of class I aminoacyl-tRNA synthetases"/>
    <property type="match status" value="1"/>
</dbReference>
<dbReference type="SUPFAM" id="SSF52374">
    <property type="entry name" value="Nucleotidylyl transferase"/>
    <property type="match status" value="1"/>
</dbReference>
<dbReference type="SUPFAM" id="SSF50677">
    <property type="entry name" value="ValRS/IleRS/LeuRS editing domain"/>
    <property type="match status" value="1"/>
</dbReference>
<dbReference type="PROSITE" id="PS00178">
    <property type="entry name" value="AA_TRNA_LIGASE_I"/>
    <property type="match status" value="1"/>
</dbReference>
<organism>
    <name type="scientific">Prochlorococcus marinus (strain NATL2A)</name>
    <dbReference type="NCBI Taxonomy" id="59920"/>
    <lineage>
        <taxon>Bacteria</taxon>
        <taxon>Bacillati</taxon>
        <taxon>Cyanobacteriota</taxon>
        <taxon>Cyanophyceae</taxon>
        <taxon>Synechococcales</taxon>
        <taxon>Prochlorococcaceae</taxon>
        <taxon>Prochlorococcus</taxon>
    </lineage>
</organism>
<comment type="function">
    <text evidence="1">Catalyzes the attachment of isoleucine to tRNA(Ile). As IleRS can inadvertently accommodate and process structurally similar amino acids such as valine, to avoid such errors it has two additional distinct tRNA(Ile)-dependent editing activities. One activity is designated as 'pretransfer' editing and involves the hydrolysis of activated Val-AMP. The other activity is designated 'posttransfer' editing and involves deacylation of mischarged Val-tRNA(Ile).</text>
</comment>
<comment type="catalytic activity">
    <reaction evidence="1">
        <text>tRNA(Ile) + L-isoleucine + ATP = L-isoleucyl-tRNA(Ile) + AMP + diphosphate</text>
        <dbReference type="Rhea" id="RHEA:11060"/>
        <dbReference type="Rhea" id="RHEA-COMP:9666"/>
        <dbReference type="Rhea" id="RHEA-COMP:9695"/>
        <dbReference type="ChEBI" id="CHEBI:30616"/>
        <dbReference type="ChEBI" id="CHEBI:33019"/>
        <dbReference type="ChEBI" id="CHEBI:58045"/>
        <dbReference type="ChEBI" id="CHEBI:78442"/>
        <dbReference type="ChEBI" id="CHEBI:78528"/>
        <dbReference type="ChEBI" id="CHEBI:456215"/>
        <dbReference type="EC" id="6.1.1.5"/>
    </reaction>
</comment>
<comment type="cofactor">
    <cofactor evidence="1">
        <name>Zn(2+)</name>
        <dbReference type="ChEBI" id="CHEBI:29105"/>
    </cofactor>
    <text evidence="1">Binds 1 zinc ion per subunit.</text>
</comment>
<comment type="subunit">
    <text evidence="1">Monomer.</text>
</comment>
<comment type="subcellular location">
    <subcellularLocation>
        <location evidence="1">Cytoplasm</location>
    </subcellularLocation>
</comment>
<comment type="domain">
    <text evidence="1">IleRS has two distinct active sites: one for aminoacylation and one for editing. The misactivated valine is translocated from the active site to the editing site, which sterically excludes the correctly activated isoleucine. The single editing site contains two valyl binding pockets, one specific for each substrate (Val-AMP or Val-tRNA(Ile)).</text>
</comment>
<comment type="similarity">
    <text evidence="1">Belongs to the class-I aminoacyl-tRNA synthetase family. IleS type 1 subfamily.</text>
</comment>
<feature type="chain" id="PRO_0000098441" description="Isoleucine--tRNA ligase">
    <location>
        <begin position="1"/>
        <end position="967"/>
    </location>
</feature>
<feature type="short sequence motif" description="'HIGH' region">
    <location>
        <begin position="68"/>
        <end position="78"/>
    </location>
</feature>
<feature type="short sequence motif" description="'KMSKS' region">
    <location>
        <begin position="624"/>
        <end position="628"/>
    </location>
</feature>
<feature type="binding site" evidence="1">
    <location>
        <position position="583"/>
    </location>
    <ligand>
        <name>L-isoleucyl-5'-AMP</name>
        <dbReference type="ChEBI" id="CHEBI:178002"/>
    </ligand>
</feature>
<feature type="binding site" evidence="1">
    <location>
        <position position="627"/>
    </location>
    <ligand>
        <name>ATP</name>
        <dbReference type="ChEBI" id="CHEBI:30616"/>
    </ligand>
</feature>
<feature type="binding site" evidence="1">
    <location>
        <position position="937"/>
    </location>
    <ligand>
        <name>Zn(2+)</name>
        <dbReference type="ChEBI" id="CHEBI:29105"/>
    </ligand>
</feature>
<feature type="binding site" evidence="1">
    <location>
        <position position="940"/>
    </location>
    <ligand>
        <name>Zn(2+)</name>
        <dbReference type="ChEBI" id="CHEBI:29105"/>
    </ligand>
</feature>
<feature type="binding site" evidence="1">
    <location>
        <position position="957"/>
    </location>
    <ligand>
        <name>Zn(2+)</name>
        <dbReference type="ChEBI" id="CHEBI:29105"/>
    </ligand>
</feature>
<feature type="binding site" evidence="1">
    <location>
        <position position="960"/>
    </location>
    <ligand>
        <name>Zn(2+)</name>
        <dbReference type="ChEBI" id="CHEBI:29105"/>
    </ligand>
</feature>
<reference key="1">
    <citation type="journal article" date="2007" name="PLoS Genet.">
        <title>Patterns and implications of gene gain and loss in the evolution of Prochlorococcus.</title>
        <authorList>
            <person name="Kettler G.C."/>
            <person name="Martiny A.C."/>
            <person name="Huang K."/>
            <person name="Zucker J."/>
            <person name="Coleman M.L."/>
            <person name="Rodrigue S."/>
            <person name="Chen F."/>
            <person name="Lapidus A."/>
            <person name="Ferriera S."/>
            <person name="Johnson J."/>
            <person name="Steglich C."/>
            <person name="Church G.M."/>
            <person name="Richardson P."/>
            <person name="Chisholm S.W."/>
        </authorList>
    </citation>
    <scope>NUCLEOTIDE SEQUENCE [LARGE SCALE GENOMIC DNA]</scope>
    <source>
        <strain>NATL2A</strain>
    </source>
</reference>
<name>SYI_PROMT</name>
<evidence type="ECO:0000255" key="1">
    <source>
        <dbReference type="HAMAP-Rule" id="MF_02002"/>
    </source>
</evidence>
<keyword id="KW-0030">Aminoacyl-tRNA synthetase</keyword>
<keyword id="KW-0067">ATP-binding</keyword>
<keyword id="KW-0963">Cytoplasm</keyword>
<keyword id="KW-0436">Ligase</keyword>
<keyword id="KW-0479">Metal-binding</keyword>
<keyword id="KW-0547">Nucleotide-binding</keyword>
<keyword id="KW-0648">Protein biosynthesis</keyword>
<keyword id="KW-1185">Reference proteome</keyword>
<keyword id="KW-0862">Zinc</keyword>
<protein>
    <recommendedName>
        <fullName evidence="1">Isoleucine--tRNA ligase</fullName>
        <ecNumber evidence="1">6.1.1.5</ecNumber>
    </recommendedName>
    <alternativeName>
        <fullName evidence="1">Isoleucyl-tRNA synthetase</fullName>
        <shortName evidence="1">IleRS</shortName>
    </alternativeName>
</protein>
<proteinExistence type="inferred from homology"/>
<gene>
    <name evidence="1" type="primary">ileS</name>
    <name type="ordered locus">PMN2A_1605</name>
</gene>
<accession>Q46HD5</accession>
<sequence length="967" mass="110010">MNNIKKDSQKDRPTYKDTLNLLQTNFGMRANATLREPELQAFWREKNIDFELGLNNSGETFTLHDGPPYANGTLHMGHALNKVLKDIINKFQTMKGKKVCYVPGWDCHGLPIELKVLQAMDKSQRAELTPIKLRKKAAAYAKKQVSQQMDGFKRWGVWGDWDQPYLSLDKKFEASQIKLFGEMVFKGYIYRGLKPVHWSPSSQTALAEAELEYPTGHTSKSIYVGFKVNQIPKRLTQEISKQAPDLINSEGKLKELKLVIWTTTPWTIPANEAISVNQKLEYVIAQSSDRSLIIIANDLLQEVSKSVGINYEKRVLIKGSILDGIIYKHPLFDKISPVVLGGDYITTESGTGLVHTAPGHGVDDFNTAKKYNLSISCPVDEKGFLTKEAGKFEGLNVLKDANSVIISDLINAGSLLKEIPYEHRYPYDWRTKKPTIFRATEQWFASVEGFRDKALSAIEDVIWLPESGKNRINSMVRERGDWCISRQRTWGVPIPVFYEKNGQEILLNKETISHIADLFSVHGADIWWEYEVSELLPPSYLNQADRWQKGTDTMDVWFDSGSSWSSVISKKENLNYPADLYLEGSDQHRGWFQSSLLTSVAVNEHAPFKKVLTHGFALDENGRKMSKSLGNIIDPLVIINGGSNKKLDPAYGADVLRLWVSSVDYSADVPIGSNILKQISDVYRKVRNTSRYLLGNLYDFDYKIDSIDIANLPLLDKWMLNRTAEVIDEISDAYNNFEFSKFFQTIQNFCVVDLSNFYLDIAKDRLYVSSKSDFRRRSCQTVLSLVIEKISGLIAPVLCHMAEDIWQNIPYDLEEASVFQRGWPNVPKSWKNSSFNCHVTELRKLRAVINRMLESCRNNQALGSSLEASVRVDISDEKVKAAIEWLAESESNNVDVLRDWFLVSSLQIGGEPWAEVLVSEDNDYASVEIAKARGFKCERCWHYEIEMSKNPQHTNICKRCEKVVLAI</sequence>